<accession>P0DMP4</accession>
<accession>P0A291</accession>
<accession>P55893</accession>
<protein>
    <recommendedName>
        <fullName>DNA adenine methylase</fullName>
        <ecNumber>2.1.1.72</ecNumber>
    </recommendedName>
    <alternativeName>
        <fullName>DNA adenine methyltransferase</fullName>
    </alternativeName>
    <alternativeName>
        <fullName>Deoxyadenosyl-methyltransferase</fullName>
    </alternativeName>
    <alternativeName>
        <fullName>M.StyDam</fullName>
    </alternativeName>
</protein>
<name>DMA_SALTM</name>
<sequence>MKKNRAFLKWAGGKYPLLDDIKRHLPKGECLVEPFVGAGSVFLNTDFSRYILADINSDLISLYNIVKLRTDEYVQASRELFMPETNQAEVYYQLREEFNTCQDPFRRAVLFLYLNRYGYNGLCRYNLRGEFNVPFGRYKRPYFPEAELYHFAEKAQNAFFYCESYADSMARADKSSVVYCDPPYAPLSATANFTAYHTNSFSLTQQAHLAEIAENLVSNRIPVLISNHDTALTREWYQLAKLHVVKVRPSISSNGGTRKKVDELLALYQPGVATPARK</sequence>
<comment type="function">
    <text evidence="2 4 6">An alpha subtype methylase, recognizes the double-stranded sequence 5'-GATC-3' and methylates A-2 (Probable) (PubMed:12654995). May be involved in methyl-directed DNA mismatch repair, initiation of chromosome replication and gene expression (By similarity).</text>
</comment>
<comment type="catalytic activity">
    <reaction>
        <text>a 2'-deoxyadenosine in DNA + S-adenosyl-L-methionine = an N(6)-methyl-2'-deoxyadenosine in DNA + S-adenosyl-L-homocysteine + H(+)</text>
        <dbReference type="Rhea" id="RHEA:15197"/>
        <dbReference type="Rhea" id="RHEA-COMP:12418"/>
        <dbReference type="Rhea" id="RHEA-COMP:12419"/>
        <dbReference type="ChEBI" id="CHEBI:15378"/>
        <dbReference type="ChEBI" id="CHEBI:57856"/>
        <dbReference type="ChEBI" id="CHEBI:59789"/>
        <dbReference type="ChEBI" id="CHEBI:90615"/>
        <dbReference type="ChEBI" id="CHEBI:90616"/>
        <dbReference type="EC" id="2.1.1.72"/>
    </reaction>
</comment>
<comment type="disruption phenotype">
    <text evidence="3">Cells are more sensitive to mutagenic agents.</text>
</comment>
<comment type="similarity">
    <text evidence="5">Belongs to the N(4)/N(6)-methyltransferase family.</text>
</comment>
<proteinExistence type="evidence at protein level"/>
<reference key="1">
    <citation type="journal article" date="1998" name="Arch. Microbiol.">
        <title>A temperature-sensitive DNA adenine methyltransferase mutant of Salmonella typhimurium.</title>
        <authorList>
            <person name="Brawer R."/>
            <person name="Batista F.D."/>
            <person name="Burrone O.R."/>
            <person name="Sordelli D.O."/>
            <person name="Cerquetti M.C."/>
        </authorList>
    </citation>
    <scope>NUCLEOTIDE SEQUENCE [GENOMIC DNA]</scope>
    <scope>FUNCTION</scope>
    <scope>DISRUPTION PHENOTYPE</scope>
    <scope>MUTAGENESIS OF 269-GLN--LYS-278</scope>
    <source>
        <strain>wt220</strain>
    </source>
</reference>
<reference key="2">
    <citation type="journal article" date="2003" name="Nucleic Acids Res.">
        <title>A nomenclature for restriction enzymes, DNA methyltransferases, homing endonucleases and their genes.</title>
        <authorList>
            <person name="Roberts R.J."/>
            <person name="Belfort M."/>
            <person name="Bestor T."/>
            <person name="Bhagwat A.S."/>
            <person name="Bickle T.A."/>
            <person name="Bitinaite J."/>
            <person name="Blumenthal R.M."/>
            <person name="Degtyarev S.K."/>
            <person name="Dryden D.T."/>
            <person name="Dybvig K."/>
            <person name="Firman K."/>
            <person name="Gromova E.S."/>
            <person name="Gumport R.I."/>
            <person name="Halford S.E."/>
            <person name="Hattman S."/>
            <person name="Heitman J."/>
            <person name="Hornby D.P."/>
            <person name="Janulaitis A."/>
            <person name="Jeltsch A."/>
            <person name="Josephsen J."/>
            <person name="Kiss A."/>
            <person name="Klaenhammer T.R."/>
            <person name="Kobayashi I."/>
            <person name="Kong H."/>
            <person name="Krueger D.H."/>
            <person name="Lacks S."/>
            <person name="Marinus M.G."/>
            <person name="Miyahara M."/>
            <person name="Morgan R.D."/>
            <person name="Murray N.E."/>
            <person name="Nagaraja V."/>
            <person name="Piekarowicz A."/>
            <person name="Pingoud A."/>
            <person name="Raleigh E."/>
            <person name="Rao D.N."/>
            <person name="Reich N."/>
            <person name="Repin V.E."/>
            <person name="Selker E.U."/>
            <person name="Shaw P.C."/>
            <person name="Stein D.C."/>
            <person name="Stoddard B.L."/>
            <person name="Szybalski W."/>
            <person name="Trautner T.A."/>
            <person name="Van Etten J.L."/>
            <person name="Vitor J.M."/>
            <person name="Wilson G.G."/>
            <person name="Xu S.Y."/>
        </authorList>
    </citation>
    <scope>NOMENCLATURE</scope>
    <scope>SUBTYPE</scope>
</reference>
<keyword id="KW-0235">DNA replication</keyword>
<keyword id="KW-0238">DNA-binding</keyword>
<keyword id="KW-0489">Methyltransferase</keyword>
<keyword id="KW-0949">S-adenosyl-L-methionine</keyword>
<keyword id="KW-0808">Transferase</keyword>
<evidence type="ECO:0000250" key="1"/>
<evidence type="ECO:0000250" key="2">
    <source>
        <dbReference type="UniProtKB" id="P0AEE8"/>
    </source>
</evidence>
<evidence type="ECO:0000269" key="3">
    <source>
    </source>
</evidence>
<evidence type="ECO:0000303" key="4">
    <source>
    </source>
</evidence>
<evidence type="ECO:0000305" key="5"/>
<evidence type="ECO:0000305" key="6">
    <source>
    </source>
</evidence>
<organism>
    <name type="scientific">Salmonella typhimurium</name>
    <dbReference type="NCBI Taxonomy" id="90371"/>
    <lineage>
        <taxon>Bacteria</taxon>
        <taxon>Pseudomonadati</taxon>
        <taxon>Pseudomonadota</taxon>
        <taxon>Gammaproteobacteria</taxon>
        <taxon>Enterobacterales</taxon>
        <taxon>Enterobacteriaceae</taxon>
        <taxon>Salmonella</taxon>
    </lineage>
</organism>
<dbReference type="EC" id="2.1.1.72"/>
<dbReference type="EMBL" id="U76993">
    <property type="protein sequence ID" value="AAB19116.1"/>
    <property type="molecule type" value="Genomic_DNA"/>
</dbReference>
<dbReference type="SMR" id="P0DMP4"/>
<dbReference type="REBASE" id="2891">
    <property type="entry name" value="M.StyADam"/>
</dbReference>
<dbReference type="eggNOG" id="COG0338">
    <property type="taxonomic scope" value="Bacteria"/>
</dbReference>
<dbReference type="GO" id="GO:1904047">
    <property type="term" value="F:S-adenosyl-L-methionine binding"/>
    <property type="evidence" value="ECO:0007669"/>
    <property type="project" value="TreeGrafter"/>
</dbReference>
<dbReference type="GO" id="GO:0043565">
    <property type="term" value="F:sequence-specific DNA binding"/>
    <property type="evidence" value="ECO:0007669"/>
    <property type="project" value="TreeGrafter"/>
</dbReference>
<dbReference type="GO" id="GO:0009007">
    <property type="term" value="F:site-specific DNA-methyltransferase (adenine-specific) activity"/>
    <property type="evidence" value="ECO:0007669"/>
    <property type="project" value="UniProtKB-EC"/>
</dbReference>
<dbReference type="GO" id="GO:0006260">
    <property type="term" value="P:DNA replication"/>
    <property type="evidence" value="ECO:0007669"/>
    <property type="project" value="UniProtKB-KW"/>
</dbReference>
<dbReference type="GO" id="GO:0009307">
    <property type="term" value="P:DNA restriction-modification system"/>
    <property type="evidence" value="ECO:0007669"/>
    <property type="project" value="InterPro"/>
</dbReference>
<dbReference type="GO" id="GO:0032259">
    <property type="term" value="P:methylation"/>
    <property type="evidence" value="ECO:0007669"/>
    <property type="project" value="UniProtKB-KW"/>
</dbReference>
<dbReference type="GO" id="GO:0006298">
    <property type="term" value="P:mismatch repair"/>
    <property type="evidence" value="ECO:0007669"/>
    <property type="project" value="TreeGrafter"/>
</dbReference>
<dbReference type="FunFam" id="1.10.1020.10:FF:000001">
    <property type="entry name" value="Site-specific DNA-methyltransferase (adenine-specific)"/>
    <property type="match status" value="1"/>
</dbReference>
<dbReference type="Gene3D" id="1.10.1020.10">
    <property type="entry name" value="Adenine-specific Methyltransferase, Domain 2"/>
    <property type="match status" value="1"/>
</dbReference>
<dbReference type="Gene3D" id="3.40.50.150">
    <property type="entry name" value="Vaccinia Virus protein VP39"/>
    <property type="match status" value="1"/>
</dbReference>
<dbReference type="InterPro" id="IPR023095">
    <property type="entry name" value="Ade_MeTrfase_dom_2"/>
</dbReference>
<dbReference type="InterPro" id="IPR002052">
    <property type="entry name" value="DNA_methylase_N6_adenine_CS"/>
</dbReference>
<dbReference type="InterPro" id="IPR012263">
    <property type="entry name" value="M_m6A_EcoRV"/>
</dbReference>
<dbReference type="InterPro" id="IPR012327">
    <property type="entry name" value="MeTrfase_D12"/>
</dbReference>
<dbReference type="InterPro" id="IPR029063">
    <property type="entry name" value="SAM-dependent_MTases_sf"/>
</dbReference>
<dbReference type="NCBIfam" id="TIGR00571">
    <property type="entry name" value="dam"/>
    <property type="match status" value="1"/>
</dbReference>
<dbReference type="NCBIfam" id="NF008152">
    <property type="entry name" value="PRK10904.1"/>
    <property type="match status" value="1"/>
</dbReference>
<dbReference type="PANTHER" id="PTHR30481">
    <property type="entry name" value="DNA ADENINE METHYLASE"/>
    <property type="match status" value="1"/>
</dbReference>
<dbReference type="PANTHER" id="PTHR30481:SF3">
    <property type="entry name" value="DNA ADENINE METHYLASE"/>
    <property type="match status" value="1"/>
</dbReference>
<dbReference type="Pfam" id="PF02086">
    <property type="entry name" value="MethyltransfD12"/>
    <property type="match status" value="1"/>
</dbReference>
<dbReference type="PIRSF" id="PIRSF000398">
    <property type="entry name" value="M_m6A_EcoRV"/>
    <property type="match status" value="1"/>
</dbReference>
<dbReference type="PRINTS" id="PR00505">
    <property type="entry name" value="D12N6MTFRASE"/>
</dbReference>
<dbReference type="SUPFAM" id="SSF53335">
    <property type="entry name" value="S-adenosyl-L-methionine-dependent methyltransferases"/>
    <property type="match status" value="1"/>
</dbReference>
<dbReference type="PROSITE" id="PS00092">
    <property type="entry name" value="N6_MTASE"/>
    <property type="match status" value="1"/>
</dbReference>
<gene>
    <name type="primary">dam</name>
</gene>
<feature type="chain" id="PRO_0000430427" description="DNA adenine methylase">
    <location>
        <begin position="1"/>
        <end position="278"/>
    </location>
</feature>
<feature type="binding site" evidence="1">
    <location>
        <position position="10"/>
    </location>
    <ligand>
        <name>S-adenosyl-L-methionine</name>
        <dbReference type="ChEBI" id="CHEBI:59789"/>
    </ligand>
</feature>
<feature type="binding site" evidence="1">
    <location>
        <position position="14"/>
    </location>
    <ligand>
        <name>S-adenosyl-L-methionine</name>
        <dbReference type="ChEBI" id="CHEBI:59789"/>
    </ligand>
</feature>
<feature type="binding site" evidence="1">
    <location>
        <position position="54"/>
    </location>
    <ligand>
        <name>S-adenosyl-L-methionine</name>
        <dbReference type="ChEBI" id="CHEBI:59789"/>
    </ligand>
</feature>
<feature type="binding site" evidence="1">
    <location>
        <position position="181"/>
    </location>
    <ligand>
        <name>S-adenosyl-L-methionine</name>
        <dbReference type="ChEBI" id="CHEBI:59789"/>
    </ligand>
</feature>
<feature type="mutagenesis site" description="In D220; temperature-sensitive, grows at 28 but less well at 37 degrees Celsius, cells are filamentous." evidence="3">
    <location>
        <begin position="269"/>
        <end position="278"/>
    </location>
</feature>